<feature type="chain" id="PRO_1000114819" description="Pyridoxine 5'-phosphate synthase">
    <location>
        <begin position="1"/>
        <end position="236"/>
    </location>
</feature>
<feature type="active site" description="Proton acceptor" evidence="1">
    <location>
        <position position="42"/>
    </location>
</feature>
<feature type="active site" description="Proton acceptor" evidence="1">
    <location>
        <position position="69"/>
    </location>
</feature>
<feature type="active site" description="Proton donor" evidence="1">
    <location>
        <position position="190"/>
    </location>
</feature>
<feature type="binding site" evidence="1">
    <location>
        <position position="6"/>
    </location>
    <ligand>
        <name>3-amino-2-oxopropyl phosphate</name>
        <dbReference type="ChEBI" id="CHEBI:57279"/>
    </ligand>
</feature>
<feature type="binding site" evidence="1">
    <location>
        <begin position="8"/>
        <end position="9"/>
    </location>
    <ligand>
        <name>1-deoxy-D-xylulose 5-phosphate</name>
        <dbReference type="ChEBI" id="CHEBI:57792"/>
    </ligand>
</feature>
<feature type="binding site" evidence="1">
    <location>
        <position position="17"/>
    </location>
    <ligand>
        <name>3-amino-2-oxopropyl phosphate</name>
        <dbReference type="ChEBI" id="CHEBI:57279"/>
    </ligand>
</feature>
<feature type="binding site" evidence="1">
    <location>
        <position position="44"/>
    </location>
    <ligand>
        <name>1-deoxy-D-xylulose 5-phosphate</name>
        <dbReference type="ChEBI" id="CHEBI:57792"/>
    </ligand>
</feature>
<feature type="binding site" evidence="1">
    <location>
        <position position="49"/>
    </location>
    <ligand>
        <name>1-deoxy-D-xylulose 5-phosphate</name>
        <dbReference type="ChEBI" id="CHEBI:57792"/>
    </ligand>
</feature>
<feature type="binding site" evidence="1">
    <location>
        <position position="99"/>
    </location>
    <ligand>
        <name>1-deoxy-D-xylulose 5-phosphate</name>
        <dbReference type="ChEBI" id="CHEBI:57792"/>
    </ligand>
</feature>
<feature type="binding site" evidence="1">
    <location>
        <position position="191"/>
    </location>
    <ligand>
        <name>3-amino-2-oxopropyl phosphate</name>
        <dbReference type="ChEBI" id="CHEBI:57279"/>
    </ligand>
</feature>
<feature type="binding site" evidence="1">
    <location>
        <begin position="212"/>
        <end position="213"/>
    </location>
    <ligand>
        <name>3-amino-2-oxopropyl phosphate</name>
        <dbReference type="ChEBI" id="CHEBI:57279"/>
    </ligand>
</feature>
<feature type="site" description="Transition state stabilizer" evidence="1">
    <location>
        <position position="150"/>
    </location>
</feature>
<organism>
    <name type="scientific">Pelodictyon phaeoclathratiforme (strain DSM 5477 / BU-1)</name>
    <dbReference type="NCBI Taxonomy" id="324925"/>
    <lineage>
        <taxon>Bacteria</taxon>
        <taxon>Pseudomonadati</taxon>
        <taxon>Chlorobiota</taxon>
        <taxon>Chlorobiia</taxon>
        <taxon>Chlorobiales</taxon>
        <taxon>Chlorobiaceae</taxon>
        <taxon>Chlorobium/Pelodictyon group</taxon>
        <taxon>Pelodictyon</taxon>
    </lineage>
</organism>
<proteinExistence type="inferred from homology"/>
<protein>
    <recommendedName>
        <fullName evidence="1">Pyridoxine 5'-phosphate synthase</fullName>
        <shortName evidence="1">PNP synthase</shortName>
        <ecNumber evidence="1">2.6.99.2</ecNumber>
    </recommendedName>
</protein>
<comment type="function">
    <text evidence="1">Catalyzes the complicated ring closure reaction between the two acyclic compounds 1-deoxy-D-xylulose-5-phosphate (DXP) and 3-amino-2-oxopropyl phosphate (1-amino-acetone-3-phosphate or AAP) to form pyridoxine 5'-phosphate (PNP) and inorganic phosphate.</text>
</comment>
<comment type="catalytic activity">
    <reaction evidence="1">
        <text>3-amino-2-oxopropyl phosphate + 1-deoxy-D-xylulose 5-phosphate = pyridoxine 5'-phosphate + phosphate + 2 H2O + H(+)</text>
        <dbReference type="Rhea" id="RHEA:15265"/>
        <dbReference type="ChEBI" id="CHEBI:15377"/>
        <dbReference type="ChEBI" id="CHEBI:15378"/>
        <dbReference type="ChEBI" id="CHEBI:43474"/>
        <dbReference type="ChEBI" id="CHEBI:57279"/>
        <dbReference type="ChEBI" id="CHEBI:57792"/>
        <dbReference type="ChEBI" id="CHEBI:58589"/>
        <dbReference type="EC" id="2.6.99.2"/>
    </reaction>
</comment>
<comment type="pathway">
    <text evidence="1">Cofactor biosynthesis; pyridoxine 5'-phosphate biosynthesis; pyridoxine 5'-phosphate from D-erythrose 4-phosphate: step 5/5.</text>
</comment>
<comment type="subunit">
    <text evidence="1">Homooctamer; tetramer of dimers.</text>
</comment>
<comment type="subcellular location">
    <subcellularLocation>
        <location evidence="1">Cytoplasm</location>
    </subcellularLocation>
</comment>
<comment type="similarity">
    <text evidence="1">Belongs to the PNP synthase family.</text>
</comment>
<accession>B4SDS5</accession>
<keyword id="KW-0963">Cytoplasm</keyword>
<keyword id="KW-0664">Pyridoxine biosynthesis</keyword>
<keyword id="KW-1185">Reference proteome</keyword>
<keyword id="KW-0808">Transferase</keyword>
<dbReference type="EC" id="2.6.99.2" evidence="1"/>
<dbReference type="EMBL" id="CP001110">
    <property type="protein sequence ID" value="ACF44443.1"/>
    <property type="molecule type" value="Genomic_DNA"/>
</dbReference>
<dbReference type="RefSeq" id="WP_012508919.1">
    <property type="nucleotide sequence ID" value="NC_011060.1"/>
</dbReference>
<dbReference type="SMR" id="B4SDS5"/>
<dbReference type="STRING" id="324925.Ppha_2248"/>
<dbReference type="KEGG" id="pph:Ppha_2248"/>
<dbReference type="eggNOG" id="COG0854">
    <property type="taxonomic scope" value="Bacteria"/>
</dbReference>
<dbReference type="HOGENOM" id="CLU_074563_0_0_10"/>
<dbReference type="OrthoDB" id="9806590at2"/>
<dbReference type="UniPathway" id="UPA00244">
    <property type="reaction ID" value="UER00313"/>
</dbReference>
<dbReference type="Proteomes" id="UP000002724">
    <property type="component" value="Chromosome"/>
</dbReference>
<dbReference type="GO" id="GO:0005829">
    <property type="term" value="C:cytosol"/>
    <property type="evidence" value="ECO:0007669"/>
    <property type="project" value="TreeGrafter"/>
</dbReference>
<dbReference type="GO" id="GO:0033856">
    <property type="term" value="F:pyridoxine 5'-phosphate synthase activity"/>
    <property type="evidence" value="ECO:0007669"/>
    <property type="project" value="UniProtKB-EC"/>
</dbReference>
<dbReference type="GO" id="GO:0008615">
    <property type="term" value="P:pyridoxine biosynthetic process"/>
    <property type="evidence" value="ECO:0007669"/>
    <property type="project" value="UniProtKB-UniRule"/>
</dbReference>
<dbReference type="CDD" id="cd00003">
    <property type="entry name" value="PNPsynthase"/>
    <property type="match status" value="1"/>
</dbReference>
<dbReference type="Gene3D" id="3.20.20.70">
    <property type="entry name" value="Aldolase class I"/>
    <property type="match status" value="1"/>
</dbReference>
<dbReference type="HAMAP" id="MF_00279">
    <property type="entry name" value="PdxJ"/>
    <property type="match status" value="1"/>
</dbReference>
<dbReference type="InterPro" id="IPR013785">
    <property type="entry name" value="Aldolase_TIM"/>
</dbReference>
<dbReference type="InterPro" id="IPR004569">
    <property type="entry name" value="PyrdxlP_synth_PdxJ"/>
</dbReference>
<dbReference type="InterPro" id="IPR036130">
    <property type="entry name" value="Pyridoxine-5'_phos_synth"/>
</dbReference>
<dbReference type="NCBIfam" id="TIGR00559">
    <property type="entry name" value="pdxJ"/>
    <property type="match status" value="1"/>
</dbReference>
<dbReference type="NCBIfam" id="NF003625">
    <property type="entry name" value="PRK05265.1-3"/>
    <property type="match status" value="1"/>
</dbReference>
<dbReference type="NCBIfam" id="NF003627">
    <property type="entry name" value="PRK05265.1-5"/>
    <property type="match status" value="1"/>
</dbReference>
<dbReference type="PANTHER" id="PTHR30456">
    <property type="entry name" value="PYRIDOXINE 5'-PHOSPHATE SYNTHASE"/>
    <property type="match status" value="1"/>
</dbReference>
<dbReference type="PANTHER" id="PTHR30456:SF0">
    <property type="entry name" value="PYRIDOXINE 5'-PHOSPHATE SYNTHASE"/>
    <property type="match status" value="1"/>
</dbReference>
<dbReference type="Pfam" id="PF03740">
    <property type="entry name" value="PdxJ"/>
    <property type="match status" value="1"/>
</dbReference>
<dbReference type="SUPFAM" id="SSF63892">
    <property type="entry name" value="Pyridoxine 5'-phosphate synthase"/>
    <property type="match status" value="1"/>
</dbReference>
<gene>
    <name evidence="1" type="primary">pdxJ</name>
    <name type="ordered locus">Ppha_2248</name>
</gene>
<reference key="1">
    <citation type="submission" date="2008-06" db="EMBL/GenBank/DDBJ databases">
        <title>Complete sequence of Pelodictyon phaeoclathratiforme BU-1.</title>
        <authorList>
            <consortium name="US DOE Joint Genome Institute"/>
            <person name="Lucas S."/>
            <person name="Copeland A."/>
            <person name="Lapidus A."/>
            <person name="Glavina del Rio T."/>
            <person name="Dalin E."/>
            <person name="Tice H."/>
            <person name="Bruce D."/>
            <person name="Goodwin L."/>
            <person name="Pitluck S."/>
            <person name="Schmutz J."/>
            <person name="Larimer F."/>
            <person name="Land M."/>
            <person name="Hauser L."/>
            <person name="Kyrpides N."/>
            <person name="Mikhailova N."/>
            <person name="Liu Z."/>
            <person name="Li T."/>
            <person name="Zhao F."/>
            <person name="Overmann J."/>
            <person name="Bryant D.A."/>
            <person name="Richardson P."/>
        </authorList>
    </citation>
    <scope>NUCLEOTIDE SEQUENCE [LARGE SCALE GENOMIC DNA]</scope>
    <source>
        <strain>DSM 5477 / BU-1</strain>
    </source>
</reference>
<sequence length="236" mass="26147">MRLAVNIDHIATLRNARGEQEPDPVAAALLAEKCGAAGIVCHLREDRRHINDHDLARLREAVTTKLDLEMAMTPELQQIALKTRPELITLVPEKREELTTEGGFDIVRHYAVLAAYLKPFNAAGIEVSLFIEPEKKAIDLAKQAGADLVELHTGLYALKKEGEAQSKELQRIREAAIHARSLGLKVVAGHGLNYLNIAPFREIEEIEEVSIGHAIIARAVLTGLEEAIREMLRIIK</sequence>
<name>PDXJ_PELPB</name>
<evidence type="ECO:0000255" key="1">
    <source>
        <dbReference type="HAMAP-Rule" id="MF_00279"/>
    </source>
</evidence>